<keyword id="KW-0328">Glycosyltransferase</keyword>
<keyword id="KW-0808">Transferase</keyword>
<organism>
    <name type="scientific">Daucus carota</name>
    <name type="common">Wild carrot</name>
    <dbReference type="NCBI Taxonomy" id="4039"/>
    <lineage>
        <taxon>Eukaryota</taxon>
        <taxon>Viridiplantae</taxon>
        <taxon>Streptophyta</taxon>
        <taxon>Embryophyta</taxon>
        <taxon>Tracheophyta</taxon>
        <taxon>Spermatophyta</taxon>
        <taxon>Magnoliopsida</taxon>
        <taxon>eudicotyledons</taxon>
        <taxon>Gunneridae</taxon>
        <taxon>Pentapetalae</taxon>
        <taxon>asterids</taxon>
        <taxon>campanulids</taxon>
        <taxon>Apiales</taxon>
        <taxon>Apiaceae</taxon>
        <taxon>Apioideae</taxon>
        <taxon>Scandiceae</taxon>
        <taxon>Daucinae</taxon>
        <taxon>Daucus</taxon>
        <taxon>Daucus sect. Daucus</taxon>
    </lineage>
</organism>
<proteinExistence type="evidence at transcript level"/>
<sequence>MGEPVLTRVHSLRERMDSTLANHRNEILMFLSRIESHGKGILKPHQLLAEYEAISKEDKLKLDDGHGAFAEVIKSTQEAIVSPPWVALAIRLRPGVWEYVRVNVHHLVVEELSVPQYLQFKEELVIGSSDANFVLELDFAPFTASFPRPTLTKSIGNGVEFLNRHLSAKMFHGKDSMHPLLEFLRLHNYNGKTLMLNNRVQNVNGLQSMLRKAGDYLSTLPSDTPYSEFEHKFQEIGFERGWGDTAERVTEMFHMLLDLLEAPDASTLETFLGKIPMVFNVVILSPHGYFAQENVLGYPDTGGQVVYILDQVPALEREMIKRIKEQGLDIKPRILIVTRLLPDAVGTTCNQRLEKVFGAEHAHILRVPFRTEKGILRKWISRFEVWPYIETFTEDVAKEIALELQAKPDLIIGNYSEGNLVASLLAHKLGVTQCTIAHALEKTKYPDSDIYWEKFDKKYHFSSQFTADLIAMNHTDFIITSTFQEIAGSKDTVGQYESHTAFTMPGLYRVVHGIDVFDPKFNIVSPGADTSVYFSYKEKEKRLTTLHPEIEELLYSSVENEEHLCIIKDKNKPILFTMARLDNVKNLTGFVEWYAKSPKLRELVNLVVVGGDRRKESKDLEEQAQMKKMYELIDTYKLNGQFRWISSQMNRVRNGELYRYIADTKGAFVQPAFYEAFGLTVVEAMTCGLPTFATLHGGPAEIIVHGKSGFHIDPYHGEQVAELLVNFFEKCKTDPSQWDAISAGGLKRIQEKYTWQIYSERLLTLAGVYGFWKHVSKLDRLEIRRYLEMFYALKYRKLAESVPLAKDE</sequence>
<dbReference type="EC" id="2.4.1.13"/>
<dbReference type="EMBL" id="X75332">
    <property type="protein sequence ID" value="CAA53081.1"/>
    <property type="molecule type" value="mRNA"/>
</dbReference>
<dbReference type="EMBL" id="Y16090">
    <property type="protein sequence ID" value="CAA76056.1"/>
    <property type="molecule type" value="Genomic_DNA"/>
</dbReference>
<dbReference type="PIR" id="S37560">
    <property type="entry name" value="S37560"/>
</dbReference>
<dbReference type="SMR" id="P49035"/>
<dbReference type="CAZy" id="GT4">
    <property type="family name" value="Glycosyltransferase Family 4"/>
</dbReference>
<dbReference type="SABIO-RK" id="P49035"/>
<dbReference type="GO" id="GO:0016157">
    <property type="term" value="F:sucrose synthase activity"/>
    <property type="evidence" value="ECO:0007669"/>
    <property type="project" value="UniProtKB-EC"/>
</dbReference>
<dbReference type="GO" id="GO:0005985">
    <property type="term" value="P:sucrose metabolic process"/>
    <property type="evidence" value="ECO:0007669"/>
    <property type="project" value="InterPro"/>
</dbReference>
<dbReference type="FunFam" id="1.20.120.1230:FF:000001">
    <property type="entry name" value="Sucrose synthase"/>
    <property type="match status" value="1"/>
</dbReference>
<dbReference type="FunFam" id="3.10.450.330:FF:000001">
    <property type="entry name" value="Sucrose synthase"/>
    <property type="match status" value="1"/>
</dbReference>
<dbReference type="FunFam" id="3.40.50.2000:FF:000004">
    <property type="entry name" value="Sucrose synthase"/>
    <property type="match status" value="1"/>
</dbReference>
<dbReference type="Gene3D" id="1.20.120.1230">
    <property type="match status" value="1"/>
</dbReference>
<dbReference type="Gene3D" id="3.10.450.330">
    <property type="match status" value="1"/>
</dbReference>
<dbReference type="Gene3D" id="3.40.50.2000">
    <property type="entry name" value="Glycogen Phosphorylase B"/>
    <property type="match status" value="2"/>
</dbReference>
<dbReference type="InterPro" id="IPR001296">
    <property type="entry name" value="Glyco_trans_1"/>
</dbReference>
<dbReference type="InterPro" id="IPR000368">
    <property type="entry name" value="Sucrose_synth_GT-B1"/>
</dbReference>
<dbReference type="InterPro" id="IPR012820">
    <property type="entry name" value="Sucrose_synthase_pln/cyn"/>
</dbReference>
<dbReference type="InterPro" id="IPR056736">
    <property type="entry name" value="SUS_EPBD"/>
</dbReference>
<dbReference type="InterPro" id="IPR056735">
    <property type="entry name" value="SUS_N"/>
</dbReference>
<dbReference type="NCBIfam" id="TIGR02470">
    <property type="entry name" value="sucr_synth"/>
    <property type="match status" value="1"/>
</dbReference>
<dbReference type="PANTHER" id="PTHR45839">
    <property type="match status" value="1"/>
</dbReference>
<dbReference type="PANTHER" id="PTHR45839:SF7">
    <property type="entry name" value="SUCROSE SYNTHASE 1"/>
    <property type="match status" value="1"/>
</dbReference>
<dbReference type="Pfam" id="PF00534">
    <property type="entry name" value="Glycos_transf_1"/>
    <property type="match status" value="1"/>
</dbReference>
<dbReference type="Pfam" id="PF00862">
    <property type="entry name" value="GT-B_Sucrose_synth"/>
    <property type="match status" value="1"/>
</dbReference>
<dbReference type="Pfam" id="PF24862">
    <property type="entry name" value="SUS_EPBD"/>
    <property type="match status" value="1"/>
</dbReference>
<dbReference type="Pfam" id="PF24861">
    <property type="entry name" value="SUS_N"/>
    <property type="match status" value="1"/>
</dbReference>
<dbReference type="SUPFAM" id="SSF53756">
    <property type="entry name" value="UDP-Glycosyltransferase/glycogen phosphorylase"/>
    <property type="match status" value="1"/>
</dbReference>
<name>SUS1_DAUCA</name>
<reference key="1">
    <citation type="journal article" date="1995" name="Plant Physiol.">
        <title>Biochemical, physiological, and molecular characterization of sucrose synthase from Daucus carota.</title>
        <authorList>
            <person name="Sebkova V."/>
            <person name="Unger C."/>
            <person name="Hardegger M."/>
            <person name="Sturm A."/>
        </authorList>
    </citation>
    <scope>NUCLEOTIDE SEQUENCE [MRNA]</scope>
    <source>
        <strain>cv. Nantaise</strain>
    </source>
</reference>
<reference key="2">
    <citation type="journal article" date="1999" name="Plant Mol. Biol.">
        <title>Tissue-specific expression of two genes for sucrose synthase in carrot (Daucus carota L.).</title>
        <authorList>
            <person name="Sturm A."/>
            <person name="Lienhard S."/>
            <person name="Schatt S."/>
            <person name="Hardegger M."/>
        </authorList>
    </citation>
    <scope>NUCLEOTIDE SEQUENCE [GENOMIC DNA]</scope>
    <source>
        <strain>cv. Nantaise</strain>
        <tissue>Leaf</tissue>
    </source>
</reference>
<evidence type="ECO:0000250" key="1">
    <source>
        <dbReference type="UniProtKB" id="P49040"/>
    </source>
</evidence>
<evidence type="ECO:0000305" key="2"/>
<accession>P49035</accession>
<protein>
    <recommendedName>
        <fullName>Sucrose synthase isoform 1</fullName>
        <ecNumber>2.4.1.13</ecNumber>
    </recommendedName>
    <alternativeName>
        <fullName>Sucrose synthase isoform I</fullName>
    </alternativeName>
    <alternativeName>
        <fullName>Sucrose-UDP glucosyltransferase 1</fullName>
    </alternativeName>
    <alternativeName>
        <fullName>Susy*Dc1</fullName>
    </alternativeName>
</protein>
<feature type="chain" id="PRO_0000204647" description="Sucrose synthase isoform 1">
    <location>
        <begin position="1"/>
        <end position="808"/>
    </location>
</feature>
<feature type="region of interest" description="GT-B glycosyltransferase" evidence="1">
    <location>
        <begin position="277"/>
        <end position="754"/>
    </location>
</feature>
<comment type="function">
    <text>Sucrose-cleaving enzyme that provides UDP-glucose and fructose for various metabolic pathways.</text>
</comment>
<comment type="catalytic activity">
    <reaction>
        <text>an NDP-alpha-D-glucose + D-fructose = a ribonucleoside 5'-diphosphate + sucrose + H(+)</text>
        <dbReference type="Rhea" id="RHEA:16241"/>
        <dbReference type="ChEBI" id="CHEBI:15378"/>
        <dbReference type="ChEBI" id="CHEBI:17992"/>
        <dbReference type="ChEBI" id="CHEBI:37721"/>
        <dbReference type="ChEBI" id="CHEBI:57930"/>
        <dbReference type="ChEBI" id="CHEBI:76533"/>
        <dbReference type="EC" id="2.4.1.13"/>
    </reaction>
</comment>
<comment type="activity regulation">
    <text>Fructose acts as a non-competitive inhibitor with an inhibition constant of 17.2 mM. In contrast, glucose inhibits uncompetitively with an inhibition constant of 4.3 mM.</text>
</comment>
<comment type="subunit">
    <text>Homotetramer.</text>
</comment>
<comment type="tissue specificity">
    <text>Expressed in stems, in roots at different developmental stages, and in flower buds, flowers and maturing seeds, with the highest levels in strong utilization sinks for sucrose such as growing stems and tap root tips.</text>
</comment>
<comment type="similarity">
    <text evidence="2">Belongs to the glycosyltransferase 1 family. Plant sucrose synthase subfamily.</text>
</comment>